<accession>C4K389</accession>
<evidence type="ECO:0000255" key="1">
    <source>
        <dbReference type="HAMAP-Rule" id="MF_01039"/>
    </source>
</evidence>
<keyword id="KW-0312">Gluconeogenesis</keyword>
<keyword id="KW-0324">Glycolysis</keyword>
<keyword id="KW-0413">Isomerase</keyword>
<sequence length="249" mass="28055">MTIKKLILVRHGESEWNKENRFTGWADVDLSEKGRVEAQQAGNLLKKKGFSFDFAYTSVLRRATNTLSLILDVLQQQNLPIEKSWRLNERHYGALQGLNKSETAAKFGSEQVKQWRRGFSTLPPALNLNDPRAPANDSLYATLNKNDLPLTESLATTVDRVVPYWDEVVKPRIIDGKRVIIVAHGNSIRALVKYVDHLSEEEIMEINIPTAVPLVYEFNSSLQPINHYYLGNAEEITQKVAAVAAQGKA</sequence>
<dbReference type="EC" id="5.4.2.11" evidence="1"/>
<dbReference type="EMBL" id="CP001277">
    <property type="protein sequence ID" value="ACQ67032.1"/>
    <property type="molecule type" value="Genomic_DNA"/>
</dbReference>
<dbReference type="RefSeq" id="WP_012737995.1">
    <property type="nucleotide sequence ID" value="NC_012751.1"/>
</dbReference>
<dbReference type="SMR" id="C4K389"/>
<dbReference type="STRING" id="572265.HDEF_0267"/>
<dbReference type="GeneID" id="66260183"/>
<dbReference type="KEGG" id="hde:HDEF_0267"/>
<dbReference type="eggNOG" id="COG0588">
    <property type="taxonomic scope" value="Bacteria"/>
</dbReference>
<dbReference type="HOGENOM" id="CLU_033323_1_1_6"/>
<dbReference type="UniPathway" id="UPA00109">
    <property type="reaction ID" value="UER00186"/>
</dbReference>
<dbReference type="Proteomes" id="UP000002334">
    <property type="component" value="Chromosome"/>
</dbReference>
<dbReference type="GO" id="GO:0004619">
    <property type="term" value="F:phosphoglycerate mutase activity"/>
    <property type="evidence" value="ECO:0007669"/>
    <property type="project" value="UniProtKB-EC"/>
</dbReference>
<dbReference type="GO" id="GO:0006094">
    <property type="term" value="P:gluconeogenesis"/>
    <property type="evidence" value="ECO:0007669"/>
    <property type="project" value="UniProtKB-UniRule"/>
</dbReference>
<dbReference type="GO" id="GO:0006096">
    <property type="term" value="P:glycolytic process"/>
    <property type="evidence" value="ECO:0007669"/>
    <property type="project" value="UniProtKB-UniRule"/>
</dbReference>
<dbReference type="CDD" id="cd07067">
    <property type="entry name" value="HP_PGM_like"/>
    <property type="match status" value="1"/>
</dbReference>
<dbReference type="FunFam" id="3.40.50.1240:FF:000003">
    <property type="entry name" value="2,3-bisphosphoglycerate-dependent phosphoglycerate mutase"/>
    <property type="match status" value="1"/>
</dbReference>
<dbReference type="Gene3D" id="3.40.50.1240">
    <property type="entry name" value="Phosphoglycerate mutase-like"/>
    <property type="match status" value="1"/>
</dbReference>
<dbReference type="HAMAP" id="MF_01039">
    <property type="entry name" value="PGAM_GpmA"/>
    <property type="match status" value="1"/>
</dbReference>
<dbReference type="InterPro" id="IPR013078">
    <property type="entry name" value="His_Pase_superF_clade-1"/>
</dbReference>
<dbReference type="InterPro" id="IPR029033">
    <property type="entry name" value="His_PPase_superfam"/>
</dbReference>
<dbReference type="InterPro" id="IPR001345">
    <property type="entry name" value="PG/BPGM_mutase_AS"/>
</dbReference>
<dbReference type="InterPro" id="IPR005952">
    <property type="entry name" value="Phosphogly_mut1"/>
</dbReference>
<dbReference type="NCBIfam" id="TIGR01258">
    <property type="entry name" value="pgm_1"/>
    <property type="match status" value="1"/>
</dbReference>
<dbReference type="NCBIfam" id="NF010713">
    <property type="entry name" value="PRK14115.1"/>
    <property type="match status" value="1"/>
</dbReference>
<dbReference type="PANTHER" id="PTHR11931">
    <property type="entry name" value="PHOSPHOGLYCERATE MUTASE"/>
    <property type="match status" value="1"/>
</dbReference>
<dbReference type="Pfam" id="PF00300">
    <property type="entry name" value="His_Phos_1"/>
    <property type="match status" value="2"/>
</dbReference>
<dbReference type="PIRSF" id="PIRSF000709">
    <property type="entry name" value="6PFK_2-Ptase"/>
    <property type="match status" value="1"/>
</dbReference>
<dbReference type="SMART" id="SM00855">
    <property type="entry name" value="PGAM"/>
    <property type="match status" value="1"/>
</dbReference>
<dbReference type="SUPFAM" id="SSF53254">
    <property type="entry name" value="Phosphoglycerate mutase-like"/>
    <property type="match status" value="1"/>
</dbReference>
<dbReference type="PROSITE" id="PS00175">
    <property type="entry name" value="PG_MUTASE"/>
    <property type="match status" value="1"/>
</dbReference>
<reference key="1">
    <citation type="journal article" date="2009" name="Proc. Natl. Acad. Sci. U.S.A.">
        <title>Hamiltonella defensa, genome evolution of protective bacterial endosymbiont from pathogenic ancestors.</title>
        <authorList>
            <person name="Degnan P.H."/>
            <person name="Yu Y."/>
            <person name="Sisneros N."/>
            <person name="Wing R.A."/>
            <person name="Moran N.A."/>
        </authorList>
    </citation>
    <scope>NUCLEOTIDE SEQUENCE [LARGE SCALE GENOMIC DNA]</scope>
    <source>
        <strain>5AT</strain>
    </source>
</reference>
<proteinExistence type="inferred from homology"/>
<organism>
    <name type="scientific">Hamiltonella defensa subsp. Acyrthosiphon pisum (strain 5AT)</name>
    <dbReference type="NCBI Taxonomy" id="572265"/>
    <lineage>
        <taxon>Bacteria</taxon>
        <taxon>Pseudomonadati</taxon>
        <taxon>Pseudomonadota</taxon>
        <taxon>Gammaproteobacteria</taxon>
        <taxon>Enterobacterales</taxon>
        <taxon>Enterobacteriaceae</taxon>
        <taxon>aphid secondary symbionts</taxon>
        <taxon>Candidatus Hamiltonella</taxon>
    </lineage>
</organism>
<protein>
    <recommendedName>
        <fullName evidence="1">2,3-bisphosphoglycerate-dependent phosphoglycerate mutase</fullName>
        <shortName evidence="1">BPG-dependent PGAM</shortName>
        <shortName evidence="1">PGAM</shortName>
        <shortName evidence="1">Phosphoglyceromutase</shortName>
        <shortName evidence="1">dPGM</shortName>
        <ecNumber evidence="1">5.4.2.11</ecNumber>
    </recommendedName>
</protein>
<gene>
    <name evidence="1" type="primary">gpmA</name>
    <name type="ordered locus">HDEF_0267</name>
</gene>
<feature type="chain" id="PRO_1000213391" description="2,3-bisphosphoglycerate-dependent phosphoglycerate mutase">
    <location>
        <begin position="1"/>
        <end position="249"/>
    </location>
</feature>
<feature type="active site" description="Tele-phosphohistidine intermediate" evidence="1">
    <location>
        <position position="11"/>
    </location>
</feature>
<feature type="active site" description="Proton donor/acceptor" evidence="1">
    <location>
        <position position="89"/>
    </location>
</feature>
<feature type="binding site" evidence="1">
    <location>
        <begin position="10"/>
        <end position="17"/>
    </location>
    <ligand>
        <name>substrate</name>
    </ligand>
</feature>
<feature type="binding site" evidence="1">
    <location>
        <begin position="23"/>
        <end position="24"/>
    </location>
    <ligand>
        <name>substrate</name>
    </ligand>
</feature>
<feature type="binding site" evidence="1">
    <location>
        <position position="62"/>
    </location>
    <ligand>
        <name>substrate</name>
    </ligand>
</feature>
<feature type="binding site" evidence="1">
    <location>
        <begin position="89"/>
        <end position="92"/>
    </location>
    <ligand>
        <name>substrate</name>
    </ligand>
</feature>
<feature type="binding site" evidence="1">
    <location>
        <position position="100"/>
    </location>
    <ligand>
        <name>substrate</name>
    </ligand>
</feature>
<feature type="binding site" evidence="1">
    <location>
        <begin position="116"/>
        <end position="117"/>
    </location>
    <ligand>
        <name>substrate</name>
    </ligand>
</feature>
<feature type="binding site" evidence="1">
    <location>
        <begin position="185"/>
        <end position="186"/>
    </location>
    <ligand>
        <name>substrate</name>
    </ligand>
</feature>
<feature type="site" description="Transition state stabilizer" evidence="1">
    <location>
        <position position="184"/>
    </location>
</feature>
<comment type="function">
    <text evidence="1">Catalyzes the interconversion of 2-phosphoglycerate and 3-phosphoglycerate.</text>
</comment>
<comment type="catalytic activity">
    <reaction evidence="1">
        <text>(2R)-2-phosphoglycerate = (2R)-3-phosphoglycerate</text>
        <dbReference type="Rhea" id="RHEA:15901"/>
        <dbReference type="ChEBI" id="CHEBI:58272"/>
        <dbReference type="ChEBI" id="CHEBI:58289"/>
        <dbReference type="EC" id="5.4.2.11"/>
    </reaction>
</comment>
<comment type="pathway">
    <text evidence="1">Carbohydrate degradation; glycolysis; pyruvate from D-glyceraldehyde 3-phosphate: step 3/5.</text>
</comment>
<comment type="subunit">
    <text evidence="1">Homodimer.</text>
</comment>
<comment type="similarity">
    <text evidence="1">Belongs to the phosphoglycerate mutase family. BPG-dependent PGAM subfamily.</text>
</comment>
<name>GPMA_HAMD5</name>